<keyword id="KW-0067">ATP-binding</keyword>
<keyword id="KW-0143">Chaperone</keyword>
<keyword id="KW-0963">Cytoplasm</keyword>
<keyword id="KW-0413">Isomerase</keyword>
<keyword id="KW-0547">Nucleotide-binding</keyword>
<sequence length="540" mass="56617">MAAKDVKFGNDARVKMLRGVNVLADAVKVTLGPKGRNVVLDKSFGAPTITKDGVSVAREIELEDKFENMGAQMVKEVASKANDAAGDGTTTATVLAQSIITEGLKAVAAGMNPMDLKRGIDKAVAAAVEELKALSVPCSDSKAIAQVGTISANSDETVGKLIAEAMDKVGKEGVITVEDGTGLQDELDVVEGMQFDRGYLSPYFINKPETGAVELDSPFILLADKKISNIRELLPVLEAVAKAGKPLLIIAEDVEGEALATLVVNTMRGIVKVAAVKAPGFGDRRKAMLQDIATLTAGTVISEEIGMELEKATLEDLGQAKRVVINKDTTTIIDGVGEEVAIQGRVTQIRQQIEEATSDYDREKLQERVAKLAGGVAVIKVGAATEVEMKEKKARVEDALHATRAAVEEGVVAGGGVALIRVASKITELKGQNEDQNVGIKVALRAMEAPLRQIVLNCGEEPSVVANTVKSGDGNYGYNAATEEYGNMIDMGILDPTKVTRSALQYAASVAGLMITTECMVTDLPKADAPDLGGAGGMGG</sequence>
<evidence type="ECO:0000255" key="1">
    <source>
        <dbReference type="HAMAP-Rule" id="MF_00600"/>
    </source>
</evidence>
<proteinExistence type="inferred from homology"/>
<comment type="function">
    <text evidence="1">Together with its co-chaperonin GroES, plays an essential role in assisting protein folding. The GroEL-GroES system forms a nano-cage that allows encapsulation of the non-native substrate proteins and provides a physical environment optimized to promote and accelerate protein folding.</text>
</comment>
<comment type="catalytic activity">
    <reaction evidence="1">
        <text>ATP + H2O + a folded polypeptide = ADP + phosphate + an unfolded polypeptide.</text>
        <dbReference type="EC" id="5.6.1.7"/>
    </reaction>
</comment>
<comment type="subunit">
    <text evidence="1">Forms a cylinder of 14 subunits composed of two heptameric rings stacked back-to-back. Interacts with the co-chaperonin GroES.</text>
</comment>
<comment type="subcellular location">
    <subcellularLocation>
        <location evidence="1">Cytoplasm</location>
    </subcellularLocation>
</comment>
<comment type="similarity">
    <text evidence="1">Belongs to the chaperonin (HSP60) family.</text>
</comment>
<organism>
    <name type="scientific">Pluralibacter gergoviae</name>
    <name type="common">Enterobacter gergoviae</name>
    <dbReference type="NCBI Taxonomy" id="61647"/>
    <lineage>
        <taxon>Bacteria</taxon>
        <taxon>Pseudomonadati</taxon>
        <taxon>Pseudomonadota</taxon>
        <taxon>Gammaproteobacteria</taxon>
        <taxon>Enterobacterales</taxon>
        <taxon>Enterobacteriaceae</taxon>
        <taxon>Pluralibacter</taxon>
    </lineage>
</organism>
<reference key="1">
    <citation type="journal article" date="1997" name="J. Gen. Appl. Microbiol.">
        <title>Phylogenetical relationship based on groE genes among phenotypically related Enterobacter, Pantoea, Klebsiella, Serratia, and Erwinia species.</title>
        <authorList>
            <person name="Harada H."/>
            <person name="Ishikawa H."/>
        </authorList>
    </citation>
    <scope>NUCLEOTIDE SEQUENCE [GENOMIC DNA]</scope>
    <source>
        <strain>ATCC 33028 / DSM 9245 / JCM 1234 / NBRC 105706 / NCIMB 13304 / CDC 604-77</strain>
    </source>
</reference>
<dbReference type="EC" id="5.6.1.7" evidence="1"/>
<dbReference type="EMBL" id="AB008139">
    <property type="protein sequence ID" value="BAA25211.1"/>
    <property type="molecule type" value="Genomic_DNA"/>
</dbReference>
<dbReference type="SMR" id="O66194"/>
<dbReference type="STRING" id="61647.LG71_06310"/>
<dbReference type="eggNOG" id="COG0459">
    <property type="taxonomic scope" value="Bacteria"/>
</dbReference>
<dbReference type="GO" id="GO:0005737">
    <property type="term" value="C:cytoplasm"/>
    <property type="evidence" value="ECO:0007669"/>
    <property type="project" value="UniProtKB-SubCell"/>
</dbReference>
<dbReference type="GO" id="GO:0005524">
    <property type="term" value="F:ATP binding"/>
    <property type="evidence" value="ECO:0007669"/>
    <property type="project" value="UniProtKB-KW"/>
</dbReference>
<dbReference type="GO" id="GO:0140662">
    <property type="term" value="F:ATP-dependent protein folding chaperone"/>
    <property type="evidence" value="ECO:0007669"/>
    <property type="project" value="InterPro"/>
</dbReference>
<dbReference type="GO" id="GO:0016853">
    <property type="term" value="F:isomerase activity"/>
    <property type="evidence" value="ECO:0007669"/>
    <property type="project" value="UniProtKB-KW"/>
</dbReference>
<dbReference type="GO" id="GO:0042026">
    <property type="term" value="P:protein refolding"/>
    <property type="evidence" value="ECO:0007669"/>
    <property type="project" value="InterPro"/>
</dbReference>
<dbReference type="CDD" id="cd03344">
    <property type="entry name" value="GroEL"/>
    <property type="match status" value="1"/>
</dbReference>
<dbReference type="FunFam" id="1.10.560.10:FF:000001">
    <property type="entry name" value="60 kDa chaperonin"/>
    <property type="match status" value="1"/>
</dbReference>
<dbReference type="FunFam" id="3.50.7.10:FF:000001">
    <property type="entry name" value="60 kDa chaperonin"/>
    <property type="match status" value="1"/>
</dbReference>
<dbReference type="Gene3D" id="3.50.7.10">
    <property type="entry name" value="GroEL"/>
    <property type="match status" value="1"/>
</dbReference>
<dbReference type="Gene3D" id="1.10.560.10">
    <property type="entry name" value="GroEL-like equatorial domain"/>
    <property type="match status" value="1"/>
</dbReference>
<dbReference type="Gene3D" id="3.30.260.10">
    <property type="entry name" value="TCP-1-like chaperonin intermediate domain"/>
    <property type="match status" value="1"/>
</dbReference>
<dbReference type="HAMAP" id="MF_00600">
    <property type="entry name" value="CH60"/>
    <property type="match status" value="1"/>
</dbReference>
<dbReference type="InterPro" id="IPR018370">
    <property type="entry name" value="Chaperonin_Cpn60_CS"/>
</dbReference>
<dbReference type="InterPro" id="IPR001844">
    <property type="entry name" value="Cpn60/GroEL"/>
</dbReference>
<dbReference type="InterPro" id="IPR002423">
    <property type="entry name" value="Cpn60/GroEL/TCP-1"/>
</dbReference>
<dbReference type="InterPro" id="IPR027409">
    <property type="entry name" value="GroEL-like_apical_dom_sf"/>
</dbReference>
<dbReference type="InterPro" id="IPR027413">
    <property type="entry name" value="GROEL-like_equatorial_sf"/>
</dbReference>
<dbReference type="InterPro" id="IPR027410">
    <property type="entry name" value="TCP-1-like_intermed_sf"/>
</dbReference>
<dbReference type="NCBIfam" id="TIGR02348">
    <property type="entry name" value="GroEL"/>
    <property type="match status" value="1"/>
</dbReference>
<dbReference type="NCBIfam" id="NF000592">
    <property type="entry name" value="PRK00013.1"/>
    <property type="match status" value="1"/>
</dbReference>
<dbReference type="NCBIfam" id="NF009487">
    <property type="entry name" value="PRK12849.1"/>
    <property type="match status" value="1"/>
</dbReference>
<dbReference type="NCBIfam" id="NF009488">
    <property type="entry name" value="PRK12850.1"/>
    <property type="match status" value="1"/>
</dbReference>
<dbReference type="NCBIfam" id="NF009489">
    <property type="entry name" value="PRK12851.1"/>
    <property type="match status" value="1"/>
</dbReference>
<dbReference type="PANTHER" id="PTHR45633">
    <property type="entry name" value="60 KDA HEAT SHOCK PROTEIN, MITOCHONDRIAL"/>
    <property type="match status" value="1"/>
</dbReference>
<dbReference type="Pfam" id="PF00118">
    <property type="entry name" value="Cpn60_TCP1"/>
    <property type="match status" value="1"/>
</dbReference>
<dbReference type="PRINTS" id="PR00298">
    <property type="entry name" value="CHAPERONIN60"/>
</dbReference>
<dbReference type="SUPFAM" id="SSF52029">
    <property type="entry name" value="GroEL apical domain-like"/>
    <property type="match status" value="1"/>
</dbReference>
<dbReference type="SUPFAM" id="SSF48592">
    <property type="entry name" value="GroEL equatorial domain-like"/>
    <property type="match status" value="1"/>
</dbReference>
<dbReference type="SUPFAM" id="SSF54849">
    <property type="entry name" value="GroEL-intermediate domain like"/>
    <property type="match status" value="1"/>
</dbReference>
<dbReference type="PROSITE" id="PS00296">
    <property type="entry name" value="CHAPERONINS_CPN60"/>
    <property type="match status" value="1"/>
</dbReference>
<name>CH60_PLUGE</name>
<accession>O66194</accession>
<protein>
    <recommendedName>
        <fullName evidence="1">Chaperonin GroEL</fullName>
        <ecNumber evidence="1">5.6.1.7</ecNumber>
    </recommendedName>
    <alternativeName>
        <fullName evidence="1">60 kDa chaperonin</fullName>
    </alternativeName>
    <alternativeName>
        <fullName evidence="1">Chaperonin-60</fullName>
        <shortName evidence="1">Cpn60</shortName>
    </alternativeName>
</protein>
<feature type="chain" id="PRO_0000063372" description="Chaperonin GroEL">
    <location>
        <begin position="1"/>
        <end position="540" status="greater than"/>
    </location>
</feature>
<feature type="binding site" evidence="1">
    <location>
        <begin position="30"/>
        <end position="33"/>
    </location>
    <ligand>
        <name>ATP</name>
        <dbReference type="ChEBI" id="CHEBI:30616"/>
    </ligand>
</feature>
<feature type="binding site" evidence="1">
    <location>
        <position position="51"/>
    </location>
    <ligand>
        <name>ATP</name>
        <dbReference type="ChEBI" id="CHEBI:30616"/>
    </ligand>
</feature>
<feature type="binding site" evidence="1">
    <location>
        <begin position="87"/>
        <end position="91"/>
    </location>
    <ligand>
        <name>ATP</name>
        <dbReference type="ChEBI" id="CHEBI:30616"/>
    </ligand>
</feature>
<feature type="binding site" evidence="1">
    <location>
        <position position="415"/>
    </location>
    <ligand>
        <name>ATP</name>
        <dbReference type="ChEBI" id="CHEBI:30616"/>
    </ligand>
</feature>
<feature type="binding site" evidence="1">
    <location>
        <begin position="479"/>
        <end position="481"/>
    </location>
    <ligand>
        <name>ATP</name>
        <dbReference type="ChEBI" id="CHEBI:30616"/>
    </ligand>
</feature>
<feature type="binding site" evidence="1">
    <location>
        <position position="495"/>
    </location>
    <ligand>
        <name>ATP</name>
        <dbReference type="ChEBI" id="CHEBI:30616"/>
    </ligand>
</feature>
<feature type="non-terminal residue">
    <location>
        <position position="540"/>
    </location>
</feature>
<gene>
    <name evidence="1" type="primary">groEL</name>
    <name evidence="1" type="synonym">groL</name>
    <name type="synonym">mopA</name>
</gene>